<dbReference type="EC" id="2.1.1.199" evidence="1"/>
<dbReference type="EMBL" id="CP000264">
    <property type="protein sequence ID" value="ABD55686.1"/>
    <property type="molecule type" value="Genomic_DNA"/>
</dbReference>
<dbReference type="RefSeq" id="WP_011455890.1">
    <property type="nucleotide sequence ID" value="NC_007802.1"/>
</dbReference>
<dbReference type="SMR" id="Q28NM6"/>
<dbReference type="STRING" id="290400.Jann_2769"/>
<dbReference type="KEGG" id="jan:Jann_2769"/>
<dbReference type="eggNOG" id="COG0275">
    <property type="taxonomic scope" value="Bacteria"/>
</dbReference>
<dbReference type="HOGENOM" id="CLU_038422_1_1_5"/>
<dbReference type="OrthoDB" id="9806637at2"/>
<dbReference type="Proteomes" id="UP000008326">
    <property type="component" value="Chromosome"/>
</dbReference>
<dbReference type="GO" id="GO:0005737">
    <property type="term" value="C:cytoplasm"/>
    <property type="evidence" value="ECO:0007669"/>
    <property type="project" value="UniProtKB-SubCell"/>
</dbReference>
<dbReference type="GO" id="GO:0071424">
    <property type="term" value="F:rRNA (cytosine-N4-)-methyltransferase activity"/>
    <property type="evidence" value="ECO:0007669"/>
    <property type="project" value="UniProtKB-UniRule"/>
</dbReference>
<dbReference type="GO" id="GO:0070475">
    <property type="term" value="P:rRNA base methylation"/>
    <property type="evidence" value="ECO:0007669"/>
    <property type="project" value="UniProtKB-UniRule"/>
</dbReference>
<dbReference type="CDD" id="cd02440">
    <property type="entry name" value="AdoMet_MTases"/>
    <property type="match status" value="1"/>
</dbReference>
<dbReference type="Gene3D" id="1.10.150.170">
    <property type="entry name" value="Putative methyltransferase TM0872, insert domain"/>
    <property type="match status" value="1"/>
</dbReference>
<dbReference type="Gene3D" id="3.40.50.150">
    <property type="entry name" value="Vaccinia Virus protein VP39"/>
    <property type="match status" value="1"/>
</dbReference>
<dbReference type="HAMAP" id="MF_01007">
    <property type="entry name" value="16SrRNA_methyltr_H"/>
    <property type="match status" value="1"/>
</dbReference>
<dbReference type="InterPro" id="IPR002903">
    <property type="entry name" value="RsmH"/>
</dbReference>
<dbReference type="InterPro" id="IPR023397">
    <property type="entry name" value="SAM-dep_MeTrfase_MraW_recog"/>
</dbReference>
<dbReference type="InterPro" id="IPR029063">
    <property type="entry name" value="SAM-dependent_MTases_sf"/>
</dbReference>
<dbReference type="NCBIfam" id="TIGR00006">
    <property type="entry name" value="16S rRNA (cytosine(1402)-N(4))-methyltransferase RsmH"/>
    <property type="match status" value="1"/>
</dbReference>
<dbReference type="PANTHER" id="PTHR11265:SF0">
    <property type="entry name" value="12S RRNA N4-METHYLCYTIDINE METHYLTRANSFERASE"/>
    <property type="match status" value="1"/>
</dbReference>
<dbReference type="PANTHER" id="PTHR11265">
    <property type="entry name" value="S-ADENOSYL-METHYLTRANSFERASE MRAW"/>
    <property type="match status" value="1"/>
</dbReference>
<dbReference type="Pfam" id="PF01795">
    <property type="entry name" value="Methyltransf_5"/>
    <property type="match status" value="1"/>
</dbReference>
<dbReference type="PIRSF" id="PIRSF004486">
    <property type="entry name" value="MraW"/>
    <property type="match status" value="1"/>
</dbReference>
<dbReference type="SUPFAM" id="SSF81799">
    <property type="entry name" value="Putative methyltransferase TM0872, insert domain"/>
    <property type="match status" value="1"/>
</dbReference>
<dbReference type="SUPFAM" id="SSF53335">
    <property type="entry name" value="S-adenosyl-L-methionine-dependent methyltransferases"/>
    <property type="match status" value="1"/>
</dbReference>
<sequence>MTDEIDKAPHIPVLLGAILREVAPVSGVWLDGTFGAGGYARGLLEGGADTVIGVDRDPLAFEMAADWAGSYGDALRLKEGTFSNLDTLADEPLDGVALDLGVSSMQLDLAERGFSFMRDGPLDMRMGQIGVSAEDLVNDAPEKLLADILFQYGEERAARRIAKAIVAERLKCRINSTLQLAGIVEKCLPSKKPGQSHPATRSFQAIRIAVNDEFGQLAQGLMAAERALRPGGKLAVVTFHSSEDRIVKKFMSERSSTGGGGSRYAPEAAAKVPGFTLTPRKAIPPDADEIARNTRARSAKLRIATRTDAPAQPVAPETLGLPQLEGF</sequence>
<organism>
    <name type="scientific">Jannaschia sp. (strain CCS1)</name>
    <dbReference type="NCBI Taxonomy" id="290400"/>
    <lineage>
        <taxon>Bacteria</taxon>
        <taxon>Pseudomonadati</taxon>
        <taxon>Pseudomonadota</taxon>
        <taxon>Alphaproteobacteria</taxon>
        <taxon>Rhodobacterales</taxon>
        <taxon>Roseobacteraceae</taxon>
        <taxon>Jannaschia</taxon>
    </lineage>
</organism>
<comment type="function">
    <text evidence="1">Specifically methylates the N4 position of cytidine in position 1402 (C1402) of 16S rRNA.</text>
</comment>
<comment type="catalytic activity">
    <reaction evidence="1">
        <text>cytidine(1402) in 16S rRNA + S-adenosyl-L-methionine = N(4)-methylcytidine(1402) in 16S rRNA + S-adenosyl-L-homocysteine + H(+)</text>
        <dbReference type="Rhea" id="RHEA:42928"/>
        <dbReference type="Rhea" id="RHEA-COMP:10286"/>
        <dbReference type="Rhea" id="RHEA-COMP:10287"/>
        <dbReference type="ChEBI" id="CHEBI:15378"/>
        <dbReference type="ChEBI" id="CHEBI:57856"/>
        <dbReference type="ChEBI" id="CHEBI:59789"/>
        <dbReference type="ChEBI" id="CHEBI:74506"/>
        <dbReference type="ChEBI" id="CHEBI:82748"/>
        <dbReference type="EC" id="2.1.1.199"/>
    </reaction>
</comment>
<comment type="subcellular location">
    <subcellularLocation>
        <location evidence="1">Cytoplasm</location>
    </subcellularLocation>
</comment>
<comment type="similarity">
    <text evidence="1">Belongs to the methyltransferase superfamily. RsmH family.</text>
</comment>
<accession>Q28NM6</accession>
<proteinExistence type="inferred from homology"/>
<reference key="1">
    <citation type="submission" date="2006-02" db="EMBL/GenBank/DDBJ databases">
        <title>Complete sequence of chromosome of Jannaschia sp. CCS1.</title>
        <authorList>
            <consortium name="US DOE Joint Genome Institute"/>
            <person name="Copeland A."/>
            <person name="Lucas S."/>
            <person name="Lapidus A."/>
            <person name="Barry K."/>
            <person name="Detter J.C."/>
            <person name="Glavina del Rio T."/>
            <person name="Hammon N."/>
            <person name="Israni S."/>
            <person name="Pitluck S."/>
            <person name="Brettin T."/>
            <person name="Bruce D."/>
            <person name="Han C."/>
            <person name="Tapia R."/>
            <person name="Gilna P."/>
            <person name="Chertkov O."/>
            <person name="Saunders E."/>
            <person name="Schmutz J."/>
            <person name="Larimer F."/>
            <person name="Land M."/>
            <person name="Kyrpides N."/>
            <person name="Lykidis A."/>
            <person name="Moran M.A."/>
            <person name="Belas R."/>
            <person name="Ye W."/>
            <person name="Buchan A."/>
            <person name="Gonzalez J.M."/>
            <person name="Schell M.A."/>
            <person name="Richardson P."/>
        </authorList>
    </citation>
    <scope>NUCLEOTIDE SEQUENCE [LARGE SCALE GENOMIC DNA]</scope>
    <source>
        <strain>CCS1</strain>
    </source>
</reference>
<gene>
    <name evidence="1" type="primary">rsmH</name>
    <name type="synonym">mraW</name>
    <name type="ordered locus">Jann_2769</name>
</gene>
<name>RSMH_JANSC</name>
<feature type="chain" id="PRO_0000386932" description="Ribosomal RNA small subunit methyltransferase H">
    <location>
        <begin position="1"/>
        <end position="327"/>
    </location>
</feature>
<feature type="region of interest" description="Disordered" evidence="2">
    <location>
        <begin position="303"/>
        <end position="327"/>
    </location>
</feature>
<feature type="binding site" evidence="1">
    <location>
        <begin position="37"/>
        <end position="39"/>
    </location>
    <ligand>
        <name>S-adenosyl-L-methionine</name>
        <dbReference type="ChEBI" id="CHEBI:59789"/>
    </ligand>
</feature>
<feature type="binding site" evidence="1">
    <location>
        <position position="55"/>
    </location>
    <ligand>
        <name>S-adenosyl-L-methionine</name>
        <dbReference type="ChEBI" id="CHEBI:59789"/>
    </ligand>
</feature>
<feature type="binding site" evidence="1">
    <location>
        <position position="82"/>
    </location>
    <ligand>
        <name>S-adenosyl-L-methionine</name>
        <dbReference type="ChEBI" id="CHEBI:59789"/>
    </ligand>
</feature>
<feature type="binding site" evidence="1">
    <location>
        <position position="99"/>
    </location>
    <ligand>
        <name>S-adenosyl-L-methionine</name>
        <dbReference type="ChEBI" id="CHEBI:59789"/>
    </ligand>
</feature>
<feature type="binding site" evidence="1">
    <location>
        <position position="106"/>
    </location>
    <ligand>
        <name>S-adenosyl-L-methionine</name>
        <dbReference type="ChEBI" id="CHEBI:59789"/>
    </ligand>
</feature>
<protein>
    <recommendedName>
        <fullName evidence="1">Ribosomal RNA small subunit methyltransferase H</fullName>
        <ecNumber evidence="1">2.1.1.199</ecNumber>
    </recommendedName>
    <alternativeName>
        <fullName evidence="1">16S rRNA m(4)C1402 methyltransferase</fullName>
    </alternativeName>
    <alternativeName>
        <fullName evidence="1">rRNA (cytosine-N(4)-)-methyltransferase RsmH</fullName>
    </alternativeName>
</protein>
<evidence type="ECO:0000255" key="1">
    <source>
        <dbReference type="HAMAP-Rule" id="MF_01007"/>
    </source>
</evidence>
<evidence type="ECO:0000256" key="2">
    <source>
        <dbReference type="SAM" id="MobiDB-lite"/>
    </source>
</evidence>
<keyword id="KW-0963">Cytoplasm</keyword>
<keyword id="KW-0489">Methyltransferase</keyword>
<keyword id="KW-1185">Reference proteome</keyword>
<keyword id="KW-0698">rRNA processing</keyword>
<keyword id="KW-0949">S-adenosyl-L-methionine</keyword>
<keyword id="KW-0808">Transferase</keyword>